<feature type="chain" id="PRO_1000136207" description="Protein PsiE">
    <location>
        <begin position="1"/>
        <end position="136"/>
    </location>
</feature>
<feature type="transmembrane region" description="Helical" evidence="1">
    <location>
        <begin position="15"/>
        <end position="35"/>
    </location>
</feature>
<feature type="transmembrane region" description="Helical" evidence="1">
    <location>
        <begin position="55"/>
        <end position="75"/>
    </location>
</feature>
<feature type="transmembrane region" description="Helical" evidence="1">
    <location>
        <begin position="82"/>
        <end position="102"/>
    </location>
</feature>
<feature type="transmembrane region" description="Helical" evidence="1">
    <location>
        <begin position="108"/>
        <end position="128"/>
    </location>
</feature>
<name>PSIE_ECO45</name>
<accession>B7MJ22</accession>
<gene>
    <name evidence="1" type="primary">psiE</name>
    <name type="ordered locus">ECS88_4505</name>
</gene>
<protein>
    <recommendedName>
        <fullName evidence="1">Protein PsiE</fullName>
    </recommendedName>
</protein>
<keyword id="KW-0997">Cell inner membrane</keyword>
<keyword id="KW-1003">Cell membrane</keyword>
<keyword id="KW-0472">Membrane</keyword>
<keyword id="KW-1185">Reference proteome</keyword>
<keyword id="KW-0812">Transmembrane</keyword>
<keyword id="KW-1133">Transmembrane helix</keyword>
<organism>
    <name type="scientific">Escherichia coli O45:K1 (strain S88 / ExPEC)</name>
    <dbReference type="NCBI Taxonomy" id="585035"/>
    <lineage>
        <taxon>Bacteria</taxon>
        <taxon>Pseudomonadati</taxon>
        <taxon>Pseudomonadota</taxon>
        <taxon>Gammaproteobacteria</taxon>
        <taxon>Enterobacterales</taxon>
        <taxon>Enterobacteriaceae</taxon>
        <taxon>Escherichia</taxon>
    </lineage>
</organism>
<dbReference type="EMBL" id="CU928161">
    <property type="protein sequence ID" value="CAR05666.1"/>
    <property type="molecule type" value="Genomic_DNA"/>
</dbReference>
<dbReference type="RefSeq" id="WP_000202899.1">
    <property type="nucleotide sequence ID" value="NC_011742.1"/>
</dbReference>
<dbReference type="SMR" id="B7MJ22"/>
<dbReference type="KEGG" id="ecz:ECS88_4505"/>
<dbReference type="HOGENOM" id="CLU_127561_0_1_6"/>
<dbReference type="Proteomes" id="UP000000747">
    <property type="component" value="Chromosome"/>
</dbReference>
<dbReference type="GO" id="GO:0005886">
    <property type="term" value="C:plasma membrane"/>
    <property type="evidence" value="ECO:0007669"/>
    <property type="project" value="UniProtKB-SubCell"/>
</dbReference>
<dbReference type="GO" id="GO:0016036">
    <property type="term" value="P:cellular response to phosphate starvation"/>
    <property type="evidence" value="ECO:0007669"/>
    <property type="project" value="InterPro"/>
</dbReference>
<dbReference type="HAMAP" id="MF_01048">
    <property type="entry name" value="PsiE"/>
    <property type="match status" value="1"/>
</dbReference>
<dbReference type="InterPro" id="IPR009315">
    <property type="entry name" value="P_starv_induced_PsiE"/>
</dbReference>
<dbReference type="InterPro" id="IPR020948">
    <property type="entry name" value="P_starv_induced_PsiE-like"/>
</dbReference>
<dbReference type="NCBIfam" id="NF002764">
    <property type="entry name" value="PRK02833.1-2"/>
    <property type="match status" value="1"/>
</dbReference>
<dbReference type="NCBIfam" id="NF002765">
    <property type="entry name" value="PRK02833.1-3"/>
    <property type="match status" value="1"/>
</dbReference>
<dbReference type="NCBIfam" id="NF002767">
    <property type="entry name" value="PRK02833.1-5"/>
    <property type="match status" value="1"/>
</dbReference>
<dbReference type="PANTHER" id="PTHR37819">
    <property type="entry name" value="PROTEIN PSIE"/>
    <property type="match status" value="1"/>
</dbReference>
<dbReference type="PANTHER" id="PTHR37819:SF1">
    <property type="entry name" value="PROTEIN PSIE"/>
    <property type="match status" value="1"/>
</dbReference>
<dbReference type="Pfam" id="PF06146">
    <property type="entry name" value="PsiE"/>
    <property type="match status" value="1"/>
</dbReference>
<dbReference type="PIRSF" id="PIRSF029598">
    <property type="entry name" value="PsiE"/>
    <property type="match status" value="1"/>
</dbReference>
<evidence type="ECO:0000255" key="1">
    <source>
        <dbReference type="HAMAP-Rule" id="MF_01048"/>
    </source>
</evidence>
<comment type="subcellular location">
    <subcellularLocation>
        <location evidence="1">Cell inner membrane</location>
        <topology evidence="1">Multi-pass membrane protein</topology>
    </subcellularLocation>
</comment>
<comment type="similarity">
    <text evidence="1">Belongs to the PsiE family.</text>
</comment>
<reference key="1">
    <citation type="journal article" date="2009" name="PLoS Genet.">
        <title>Organised genome dynamics in the Escherichia coli species results in highly diverse adaptive paths.</title>
        <authorList>
            <person name="Touchon M."/>
            <person name="Hoede C."/>
            <person name="Tenaillon O."/>
            <person name="Barbe V."/>
            <person name="Baeriswyl S."/>
            <person name="Bidet P."/>
            <person name="Bingen E."/>
            <person name="Bonacorsi S."/>
            <person name="Bouchier C."/>
            <person name="Bouvet O."/>
            <person name="Calteau A."/>
            <person name="Chiapello H."/>
            <person name="Clermont O."/>
            <person name="Cruveiller S."/>
            <person name="Danchin A."/>
            <person name="Diard M."/>
            <person name="Dossat C."/>
            <person name="Karoui M.E."/>
            <person name="Frapy E."/>
            <person name="Garry L."/>
            <person name="Ghigo J.M."/>
            <person name="Gilles A.M."/>
            <person name="Johnson J."/>
            <person name="Le Bouguenec C."/>
            <person name="Lescat M."/>
            <person name="Mangenot S."/>
            <person name="Martinez-Jehanne V."/>
            <person name="Matic I."/>
            <person name="Nassif X."/>
            <person name="Oztas S."/>
            <person name="Petit M.A."/>
            <person name="Pichon C."/>
            <person name="Rouy Z."/>
            <person name="Ruf C.S."/>
            <person name="Schneider D."/>
            <person name="Tourret J."/>
            <person name="Vacherie B."/>
            <person name="Vallenet D."/>
            <person name="Medigue C."/>
            <person name="Rocha E.P.C."/>
            <person name="Denamur E."/>
        </authorList>
    </citation>
    <scope>NUCLEOTIDE SEQUENCE [LARGE SCALE GENOMIC DNA]</scope>
    <source>
        <strain>S88 / ExPEC</strain>
    </source>
</reference>
<sequence>MTSLSRPRVEFISTILQTVLNLGLLCLGLILVVFLGKETVHLADVLFAPEQASKYELVEGLVVYFLYFEFIALIVKYFQSGFHFPLRYFVYIGITAIVRLIIVDHKSPLDVLIYSAAILLLVITLWLCNSKRLKRE</sequence>
<proteinExistence type="inferred from homology"/>